<sequence>MSSGTPTPSNVVLIGKKPVMNYVLAALTLLNQGVSEIVIKARGRAISKAVDTVEIVRNRFLPDKIEIKEIRVGSQVVTSQDGRQSRVSTIEIAIRKK</sequence>
<protein>
    <recommendedName>
        <fullName evidence="3">DNA/RNA-binding protein Alba 1</fullName>
        <ecNumber evidence="13">3.1.-.-</ecNumber>
    </recommendedName>
</protein>
<accession>P60849</accession>
<accession>P74761</accession>
<accession>Q97ZF6</accession>
<name>ALBA1_SACS2</name>
<gene>
    <name evidence="3" type="primary">albA1</name>
    <name evidence="14 15" type="synonym">sso10b</name>
    <name type="ordered locus">SSO0962</name>
</gene>
<proteinExistence type="evidence at protein level"/>
<comment type="function">
    <text evidence="1 2 4 5 7 9 10 12 13">Binds double-stranded DNA tightly but without sequence specificity (PubMed:11935028, PubMed:12198167, PubMed:20082605). Involved in DNA compaction (PubMed:16004869, PubMed:23271660, PubMed:35454068). Possesses DNA endonuclease activity (PubMed:36947546). Prevents transcription after DNA binding (PubMed:11935028). Binds single-stranded DNA and RNA in vitro (PubMed:20082605). Binds rRNA and mRNA in vivo (By similarity). May play a role in maintaining the structural and functional stability of RNA, and, perhaps, ribosomes (By similarity). Binds double-stranded RNA (dsRNA) and exhibits RNA chaperone activity (By similarity). Required for normal growth (By similarity).</text>
</comment>
<comment type="subunit">
    <text evidence="2 5 7 9 10 12">Homodimer; homodimers assemble cooperatively on DNA with consecutive dimers binding end-to-end (PubMed:12198167, PubMed:20082605, PubMed:23271660). May form higher order oligomers, e.g. homotetramers (By similarity). Interacts with Alba 2; heterodimers lack cooperative DNA-binding behavior and result in more compact chromatin structures compared to Alba 1 homodimers (PubMed:16004869, PubMed:23271660, PubMed:35454068).</text>
</comment>
<comment type="interaction">
    <interactant intactId="EBI-9021190">
        <id>P60849</id>
    </interactant>
    <interactant intactId="EBI-9021190">
        <id>P60849</id>
        <label>albA1</label>
    </interactant>
    <organismsDiffer>false</organismsDiffer>
    <experiments>2</experiments>
</comment>
<comment type="interaction">
    <interactant intactId="EBI-9021190">
        <id>P60849</id>
    </interactant>
    <interactant intactId="EBI-9021196">
        <id>Q97ZF4</id>
        <label>albA2</label>
    </interactant>
    <organismsDiffer>false</organismsDiffer>
    <experiments>6</experiments>
</comment>
<comment type="subcellular location">
    <subcellularLocation>
        <location evidence="3 6">Cytoplasm</location>
    </subcellularLocation>
    <subcellularLocation>
        <location evidence="3 6">Chromosome</location>
    </subcellularLocation>
</comment>
<comment type="PTM">
    <text evidence="1 4 6">Acetylated (PubMed:11935028). Acetylation at Lys-16 by the Pat acetylase decreases DNA-binding affinity (PubMed:15824122). Deacetylation at Lys-16 by the CobB deacetylase increases DNA-binding affinity (PubMed:11935028). Acetylation at Ser-2 is involved in the regulation of the turnover of the protein (By similarity).</text>
</comment>
<comment type="mass spectrometry"/>
<comment type="similarity">
    <text evidence="3 16">Belongs to the histone-like Alba family.</text>
</comment>
<comment type="caution">
    <text evidence="4 6 11">Acetylation at Lys-16 is described as a mechanism of Alba 1 activity regulation (PubMed:11935028, PubMed:15824122). However, in one of the reported experiments, no acetylation at Lys-16 was detected (PubMed:29679495).</text>
</comment>
<comment type="sequence caution" evidence="16">
    <conflict type="erroneous initiation">
        <sequence resource="EMBL-CDS" id="AAK41236"/>
    </conflict>
</comment>
<feature type="initiator methionine" description="Removed" evidence="4">
    <location>
        <position position="1"/>
    </location>
</feature>
<feature type="chain" id="PRO_0000151712" description="DNA/RNA-binding protein Alba 1">
    <location>
        <begin position="2"/>
        <end position="97"/>
    </location>
</feature>
<feature type="binding site" evidence="2">
    <location>
        <position position="16"/>
    </location>
    <ligand>
        <name>RNA</name>
        <dbReference type="ChEBI" id="CHEBI:33697"/>
    </ligand>
</feature>
<feature type="binding site" evidence="2">
    <location>
        <position position="17"/>
    </location>
    <ligand>
        <name>RNA</name>
        <dbReference type="ChEBI" id="CHEBI:33697"/>
    </ligand>
</feature>
<feature type="binding site" evidence="2">
    <location>
        <position position="22"/>
    </location>
    <ligand>
        <name>RNA</name>
        <dbReference type="ChEBI" id="CHEBI:33697"/>
    </ligand>
</feature>
<feature type="binding site" evidence="2">
    <location>
        <position position="42"/>
    </location>
    <ligand>
        <name>RNA</name>
        <dbReference type="ChEBI" id="CHEBI:33697"/>
    </ligand>
</feature>
<feature type="binding site" evidence="2">
    <location>
        <position position="44"/>
    </location>
    <ligand>
        <name>RNA</name>
        <dbReference type="ChEBI" id="CHEBI:33697"/>
    </ligand>
</feature>
<feature type="site" description="Not acetylated by pat acetylase" evidence="6">
    <location>
        <position position="17"/>
    </location>
</feature>
<feature type="modified residue" description="N-acetylserine; by ard1 acetylase" evidence="4 8 11">
    <location>
        <position position="2"/>
    </location>
</feature>
<feature type="modified residue" description="N6,N6,N6-trimethyllysine; alternate" evidence="11">
    <location>
        <position position="16"/>
    </location>
</feature>
<feature type="modified residue" description="N6,N6-dimethyllysine; alternate" evidence="11">
    <location>
        <position position="16"/>
    </location>
</feature>
<feature type="modified residue" description="N6-acetyllysine; by pat acetylase; alternate" evidence="4 6">
    <location>
        <position position="16"/>
    </location>
</feature>
<feature type="modified residue" description="N6-methyllysine; alternate" evidence="11">
    <location>
        <position position="16"/>
    </location>
</feature>
<feature type="modified residue" description="Deamidated asparagine; partial" evidence="11">
    <location>
        <position position="31"/>
    </location>
</feature>
<feature type="modified residue" description="Deamidated glutamine; partial" evidence="11">
    <location>
        <position position="32"/>
    </location>
</feature>
<feature type="modified residue" description="N6-methyllysine; partial" evidence="11">
    <location>
        <position position="40"/>
    </location>
</feature>
<feature type="modified residue" description="N6-acetyllysine; partial" evidence="11">
    <location>
        <position position="48"/>
    </location>
</feature>
<feature type="modified residue" description="Aspartate methyl ester; partial" evidence="11">
    <location>
        <position position="51"/>
    </location>
</feature>
<feature type="modified residue" description="Deamidated asparagine; partial" evidence="11">
    <location>
        <position position="58"/>
    </location>
</feature>
<feature type="modified residue" description="N6-acetyllysine; alternate; partial" evidence="11">
    <location>
        <position position="64"/>
    </location>
</feature>
<feature type="modified residue" description="N6-methyllysine; alternate; partial" evidence="11">
    <location>
        <position position="64"/>
    </location>
</feature>
<feature type="modified residue" description="N6-acetyllysine; partial" evidence="11">
    <location>
        <position position="68"/>
    </location>
</feature>
<feature type="modified residue" description="Glutamate methyl ester (Glu); partial" evidence="11">
    <location>
        <position position="69"/>
    </location>
</feature>
<feature type="modified residue" description="N5-methylglutamine; partial" evidence="11">
    <location>
        <position position="75"/>
    </location>
</feature>
<feature type="modified residue" description="Aspartate methyl ester; partial" evidence="11">
    <location>
        <position position="81"/>
    </location>
</feature>
<feature type="modified residue" description="N6-methyllysine; partial" evidence="11">
    <location>
        <position position="97"/>
    </location>
</feature>
<feature type="mutagenesis site" description="Decreases acetylation." evidence="8">
    <original>S</original>
    <variation>A</variation>
    <variation>E</variation>
    <variation>G</variation>
    <variation>L</variation>
    <variation>T</variation>
    <variation>P</variation>
    <variation>V</variation>
    <location>
        <position position="2"/>
    </location>
</feature>
<feature type="mutagenesis site" description="Decreases DNA binding affinity." evidence="4">
    <original>K</original>
    <variation>A</variation>
    <location>
        <position position="16"/>
    </location>
</feature>
<feature type="mutagenesis site" description="Decreases DNA binding affinity. Unable to repress transcription. Abolishes acetylation." evidence="4 6">
    <original>K</original>
    <variation>E</variation>
    <location>
        <position position="16"/>
    </location>
</feature>
<feature type="mutagenesis site" description="Decreases DNA binding affinity. Unable to repress transcription." evidence="4">
    <original>K</original>
    <variation>A</variation>
    <location>
        <position position="17"/>
    </location>
</feature>
<feature type="mutagenesis site" description="Decreases DNA binding affinity. No significant effect on acetylation." evidence="4 6">
    <original>K</original>
    <variation>E</variation>
    <location>
        <position position="17"/>
    </location>
</feature>
<feature type="mutagenesis site" description="Decreases DNA binding affinity and cooperative side-by-side binding between homodimers." evidence="9 10">
    <original>F</original>
    <variation>A</variation>
    <location>
        <position position="60"/>
    </location>
</feature>
<feature type="strand" evidence="20">
    <location>
        <begin position="11"/>
        <end position="13"/>
    </location>
</feature>
<feature type="helix" evidence="20">
    <location>
        <begin position="19"/>
        <end position="31"/>
    </location>
</feature>
<feature type="strand" evidence="20">
    <location>
        <begin position="36"/>
        <end position="42"/>
    </location>
</feature>
<feature type="helix" evidence="20">
    <location>
        <begin position="45"/>
        <end position="59"/>
    </location>
</feature>
<feature type="turn" evidence="20">
    <location>
        <begin position="62"/>
        <end position="64"/>
    </location>
</feature>
<feature type="strand" evidence="20">
    <location>
        <begin position="65"/>
        <end position="79"/>
    </location>
</feature>
<feature type="strand" evidence="20">
    <location>
        <begin position="84"/>
        <end position="96"/>
    </location>
</feature>
<evidence type="ECO:0000250" key="1">
    <source>
        <dbReference type="UniProtKB" id="F0NHH1"/>
    </source>
</evidence>
<evidence type="ECO:0000250" key="2">
    <source>
        <dbReference type="UniProtKB" id="P60848"/>
    </source>
</evidence>
<evidence type="ECO:0000255" key="3">
    <source>
        <dbReference type="HAMAP-Rule" id="MF_01122"/>
    </source>
</evidence>
<evidence type="ECO:0000269" key="4">
    <source>
    </source>
</evidence>
<evidence type="ECO:0000269" key="5">
    <source>
    </source>
</evidence>
<evidence type="ECO:0000269" key="6">
    <source>
    </source>
</evidence>
<evidence type="ECO:0000269" key="7">
    <source>
    </source>
</evidence>
<evidence type="ECO:0000269" key="8">
    <source>
    </source>
</evidence>
<evidence type="ECO:0000269" key="9">
    <source>
    </source>
</evidence>
<evidence type="ECO:0000269" key="10">
    <source>
    </source>
</evidence>
<evidence type="ECO:0000269" key="11">
    <source>
    </source>
</evidence>
<evidence type="ECO:0000269" key="12">
    <source>
    </source>
</evidence>
<evidence type="ECO:0000269" key="13">
    <source>
    </source>
</evidence>
<evidence type="ECO:0000303" key="14">
    <source>
    </source>
</evidence>
<evidence type="ECO:0000303" key="15">
    <source>
    </source>
</evidence>
<evidence type="ECO:0000305" key="16"/>
<evidence type="ECO:0007744" key="17">
    <source>
        <dbReference type="PDB" id="1H0X"/>
    </source>
</evidence>
<evidence type="ECO:0007744" key="18">
    <source>
        <dbReference type="PDB" id="1H0Y"/>
    </source>
</evidence>
<evidence type="ECO:0007744" key="19">
    <source>
        <dbReference type="PDB" id="2BKY"/>
    </source>
</evidence>
<evidence type="ECO:0007829" key="20">
    <source>
        <dbReference type="PDB" id="2BKY"/>
    </source>
</evidence>
<organism>
    <name type="scientific">Saccharolobus solfataricus (strain ATCC 35092 / DSM 1617 / JCM 11322 / P2)</name>
    <name type="common">Sulfolobus solfataricus</name>
    <dbReference type="NCBI Taxonomy" id="273057"/>
    <lineage>
        <taxon>Archaea</taxon>
        <taxon>Thermoproteota</taxon>
        <taxon>Thermoprotei</taxon>
        <taxon>Sulfolobales</taxon>
        <taxon>Sulfolobaceae</taxon>
        <taxon>Saccharolobus</taxon>
    </lineage>
</organism>
<dbReference type="EC" id="3.1.-.-" evidence="13"/>
<dbReference type="EMBL" id="AJ298830">
    <property type="protein sequence ID" value="CAC12668.1"/>
    <property type="molecule type" value="Genomic_DNA"/>
</dbReference>
<dbReference type="EMBL" id="AE006641">
    <property type="protein sequence ID" value="AAK41236.1"/>
    <property type="status" value="ALT_INIT"/>
    <property type="molecule type" value="Genomic_DNA"/>
</dbReference>
<dbReference type="PIR" id="E90247">
    <property type="entry name" value="E90247"/>
</dbReference>
<dbReference type="RefSeq" id="WP_009992406.1">
    <property type="nucleotide sequence ID" value="NC_002754.1"/>
</dbReference>
<dbReference type="PDB" id="1H0X">
    <property type="method" value="X-ray"/>
    <property type="resolution" value="2.60 A"/>
    <property type="chains" value="A/B=1-97"/>
</dbReference>
<dbReference type="PDB" id="1H0Y">
    <property type="method" value="X-ray"/>
    <property type="resolution" value="2.80 A"/>
    <property type="chains" value="A=1-97"/>
</dbReference>
<dbReference type="PDB" id="2BKY">
    <property type="method" value="X-ray"/>
    <property type="resolution" value="1.70 A"/>
    <property type="chains" value="A/B=1-97"/>
</dbReference>
<dbReference type="PDB" id="4R3L">
    <property type="method" value="X-ray"/>
    <property type="resolution" value="1.84 A"/>
    <property type="chains" value="B=2-7"/>
</dbReference>
<dbReference type="PDBsum" id="1H0X"/>
<dbReference type="PDBsum" id="1H0Y"/>
<dbReference type="PDBsum" id="2BKY"/>
<dbReference type="PDBsum" id="4R3L"/>
<dbReference type="BMRB" id="P60849"/>
<dbReference type="SMR" id="P60849"/>
<dbReference type="DIP" id="DIP-48444N"/>
<dbReference type="FunCoup" id="P60849">
    <property type="interactions" value="1"/>
</dbReference>
<dbReference type="IntAct" id="P60849">
    <property type="interactions" value="1"/>
</dbReference>
<dbReference type="STRING" id="273057.SSO0962"/>
<dbReference type="iPTMnet" id="P60849"/>
<dbReference type="PaxDb" id="273057-SSO0962"/>
<dbReference type="EnsemblBacteria" id="AAK41236">
    <property type="protein sequence ID" value="AAK41236"/>
    <property type="gene ID" value="SSO0962"/>
</dbReference>
<dbReference type="GeneID" id="84061577"/>
<dbReference type="KEGG" id="sso:SSO0962"/>
<dbReference type="PATRIC" id="fig|273057.12.peg.960"/>
<dbReference type="eggNOG" id="arCOG01753">
    <property type="taxonomic scope" value="Archaea"/>
</dbReference>
<dbReference type="HOGENOM" id="CLU_110989_1_0_2"/>
<dbReference type="InParanoid" id="P60849"/>
<dbReference type="PhylomeDB" id="P60849"/>
<dbReference type="EvolutionaryTrace" id="P60849"/>
<dbReference type="Proteomes" id="UP000001974">
    <property type="component" value="Chromosome"/>
</dbReference>
<dbReference type="GO" id="GO:0005694">
    <property type="term" value="C:chromosome"/>
    <property type="evidence" value="ECO:0007669"/>
    <property type="project" value="UniProtKB-SubCell"/>
</dbReference>
<dbReference type="GO" id="GO:0005737">
    <property type="term" value="C:cytoplasm"/>
    <property type="evidence" value="ECO:0007669"/>
    <property type="project" value="UniProtKB-SubCell"/>
</dbReference>
<dbReference type="GO" id="GO:0003690">
    <property type="term" value="F:double-stranded DNA binding"/>
    <property type="evidence" value="ECO:0007669"/>
    <property type="project" value="UniProtKB-UniRule"/>
</dbReference>
<dbReference type="GO" id="GO:0042802">
    <property type="term" value="F:identical protein binding"/>
    <property type="evidence" value="ECO:0000353"/>
    <property type="project" value="IntAct"/>
</dbReference>
<dbReference type="GO" id="GO:0004518">
    <property type="term" value="F:nuclease activity"/>
    <property type="evidence" value="ECO:0007669"/>
    <property type="project" value="UniProtKB-KW"/>
</dbReference>
<dbReference type="GO" id="GO:0003723">
    <property type="term" value="F:RNA binding"/>
    <property type="evidence" value="ECO:0000318"/>
    <property type="project" value="GO_Central"/>
</dbReference>
<dbReference type="GO" id="GO:0030261">
    <property type="term" value="P:chromosome condensation"/>
    <property type="evidence" value="ECO:0007669"/>
    <property type="project" value="UniProtKB-KW"/>
</dbReference>
<dbReference type="FunFam" id="3.30.110.20:FF:000008">
    <property type="entry name" value="DNA/RNA-binding protein Alba 1"/>
    <property type="match status" value="1"/>
</dbReference>
<dbReference type="Gene3D" id="3.30.110.20">
    <property type="entry name" value="Alba-like domain"/>
    <property type="match status" value="1"/>
</dbReference>
<dbReference type="HAMAP" id="MF_01122">
    <property type="entry name" value="AlbA"/>
    <property type="match status" value="1"/>
</dbReference>
<dbReference type="InterPro" id="IPR036882">
    <property type="entry name" value="Alba-like_dom_sf"/>
</dbReference>
<dbReference type="InterPro" id="IPR013795">
    <property type="entry name" value="DNA/RNA-bd_Alba"/>
</dbReference>
<dbReference type="InterPro" id="IPR002775">
    <property type="entry name" value="DNA/RNA-bd_Alba-like"/>
</dbReference>
<dbReference type="NCBIfam" id="TIGR00285">
    <property type="entry name" value="DNA-binding protein Alba"/>
    <property type="match status" value="1"/>
</dbReference>
<dbReference type="NCBIfam" id="NF003088">
    <property type="entry name" value="PRK04015.1"/>
    <property type="match status" value="1"/>
</dbReference>
<dbReference type="Pfam" id="PF01918">
    <property type="entry name" value="Alba"/>
    <property type="match status" value="1"/>
</dbReference>
<dbReference type="PIRSF" id="PIRSF028732">
    <property type="entry name" value="Alba"/>
    <property type="match status" value="1"/>
</dbReference>
<dbReference type="SUPFAM" id="SSF82704">
    <property type="entry name" value="AlbA-like"/>
    <property type="match status" value="1"/>
</dbReference>
<keyword id="KW-0002">3D-structure</keyword>
<keyword id="KW-0007">Acetylation</keyword>
<keyword id="KW-0143">Chaperone</keyword>
<keyword id="KW-0158">Chromosome</keyword>
<keyword id="KW-0963">Cytoplasm</keyword>
<keyword id="KW-0226">DNA condensation</keyword>
<keyword id="KW-0238">DNA-binding</keyword>
<keyword id="KW-0378">Hydrolase</keyword>
<keyword id="KW-0488">Methylation</keyword>
<keyword id="KW-0540">Nuclease</keyword>
<keyword id="KW-1185">Reference proteome</keyword>
<keyword id="KW-0694">RNA-binding</keyword>
<reference key="1">
    <citation type="submission" date="2000-10" db="EMBL/GenBank/DDBJ databases">
        <title>Thermostable DNA-binding proteins from extremophilic Archaea, characterization and heterologous expression of 10kDa proteins from Sulfolobus solfataricus and Sulfolobus shibatae.</title>
        <authorList>
            <person name="Wu X.Q."/>
            <person name="Oppermann M."/>
            <person name="Knapp S."/>
            <person name="Berndt K.D."/>
            <person name="Bergman T."/>
            <person name="Joernvall H."/>
            <person name="Oppermann U.C.T."/>
        </authorList>
    </citation>
    <scope>NUCLEOTIDE SEQUENCE [GENOMIC DNA]</scope>
    <source>
        <strain>ATCC 35092 / DSM 1617 / JCM 11322 / P2</strain>
    </source>
</reference>
<reference key="2">
    <citation type="journal article" date="2001" name="Proc. Natl. Acad. Sci. U.S.A.">
        <title>The complete genome of the crenarchaeon Sulfolobus solfataricus P2.</title>
        <authorList>
            <person name="She Q."/>
            <person name="Singh R.K."/>
            <person name="Confalonieri F."/>
            <person name="Zivanovic Y."/>
            <person name="Allard G."/>
            <person name="Awayez M.J."/>
            <person name="Chan-Weiher C.C.-Y."/>
            <person name="Clausen I.G."/>
            <person name="Curtis B.A."/>
            <person name="De Moors A."/>
            <person name="Erauso G."/>
            <person name="Fletcher C."/>
            <person name="Gordon P.M.K."/>
            <person name="Heikamp-de Jong I."/>
            <person name="Jeffries A.C."/>
            <person name="Kozera C.J."/>
            <person name="Medina N."/>
            <person name="Peng X."/>
            <person name="Thi-Ngoc H.P."/>
            <person name="Redder P."/>
            <person name="Schenk M.E."/>
            <person name="Theriault C."/>
            <person name="Tolstrup N."/>
            <person name="Charlebois R.L."/>
            <person name="Doolittle W.F."/>
            <person name="Duguet M."/>
            <person name="Gaasterland T."/>
            <person name="Garrett R.A."/>
            <person name="Ragan M.A."/>
            <person name="Sensen C.W."/>
            <person name="Van der Oost J."/>
        </authorList>
    </citation>
    <scope>NUCLEOTIDE SEQUENCE [LARGE SCALE GENOMIC DNA]</scope>
    <source>
        <strain>ATCC 35092 / DSM 1617 / JCM 11322 / P2</strain>
    </source>
</reference>
<reference key="3">
    <citation type="journal article" date="2002" name="Science">
        <title>The interaction of Alba, a conserved archaeal chromatin protein, with Sir2 and its regulation by acetylation.</title>
        <authorList>
            <person name="Bell S.D."/>
            <person name="Botting C.H."/>
            <person name="Wardleworth B.N."/>
            <person name="Jackson S.P."/>
            <person name="White M.F."/>
        </authorList>
    </citation>
    <scope>FUNCTION</scope>
    <scope>ACETYLATION AT SER-2 AND LYS-16</scope>
    <scope>MASS SPECTROMETRY</scope>
    <scope>MUTAGENESIS OF LYS-16 AND LYS-17</scope>
    <source>
        <strain>ATCC 35092 / DSM 1617 / JCM 11322 / P2</strain>
    </source>
</reference>
<reference evidence="16" key="4">
    <citation type="journal article" date="2005" name="J. Biol. Chem.">
        <title>Sir2 and the acetyltransferase, Pat, regulate the archaeal chromatin protein, Alba.</title>
        <authorList>
            <person name="Marsh V.L."/>
            <person name="Peak-Chew S.Y."/>
            <person name="Bell S.D."/>
        </authorList>
    </citation>
    <scope>SUBCELLULAR LOCATION</scope>
    <scope>ACETYLATION AT LYS-16</scope>
    <scope>MUTAGENESIS OF LYS-16 AND LYS-17</scope>
</reference>
<reference evidence="16" key="5">
    <citation type="journal article" date="2007" name="Mol. Microbiol.">
        <title>An acetylase with relaxed specificity catalyses protein N-terminal acetylation in Sulfolobus solfataricus.</title>
        <authorList>
            <person name="Mackay D.T."/>
            <person name="Botting C.H."/>
            <person name="Taylor G.L."/>
            <person name="White M.F."/>
        </authorList>
    </citation>
    <scope>ACETYLATION AT SER-2</scope>
    <scope>MUTAGENESIS OF SER-2</scope>
</reference>
<reference evidence="16" key="6">
    <citation type="journal article" date="2010" name="Biochem. J.">
        <title>Dimer-dimer stacking interactions are important for nucleic acid binding by the archaeal chromatin protein Alba.</title>
        <authorList>
            <person name="Jelinska C."/>
            <person name="Petrovic-Stojanovska B."/>
            <person name="Ingledew W.J."/>
            <person name="White M.F."/>
        </authorList>
    </citation>
    <scope>FUNCTION</scope>
    <scope>SUBUNIT</scope>
    <scope>MUTAGENESIS OF PHE-60</scope>
</reference>
<reference evidence="16" key="7">
    <citation type="journal article" date="2012" name="Nat. Commun.">
        <title>Alba shapes the archaeal genome using a delicate balance of bridging and stiffening the DNA.</title>
        <authorList>
            <person name="Laurens N."/>
            <person name="Driessen R.P."/>
            <person name="Heller I."/>
            <person name="Vorselen D."/>
            <person name="Noom M.C."/>
            <person name="Hol F.J."/>
            <person name="White M.F."/>
            <person name="Dame R.T."/>
            <person name="Wuite G.J."/>
        </authorList>
    </citation>
    <scope>FUNCTION</scope>
    <scope>SUBUNIT</scope>
    <scope>INTERACTION WITH ALBA2</scope>
    <scope>MUTAGENESIS OF PHE-60</scope>
</reference>
<reference evidence="16" key="8">
    <citation type="journal article" date="2018" name="Mol. Microbiol.">
        <title>Insights into the post-translational modifications of archaeal Sis10b (Alba): lysine-16 is methylated, not acetylated, and this does not regulate transcription or growth.</title>
        <authorList>
            <person name="Cao J."/>
            <person name="Wang Q."/>
            <person name="Liu T."/>
            <person name="Peng N."/>
            <person name="Huang L."/>
        </authorList>
    </citation>
    <scope>ACETYLATION AT SER-2; LYS-48; LYS-64 AND LYS-68</scope>
    <scope>DEAMIDATION AT ASN-31; GLN-32 AND ASN-58</scope>
    <scope>METHYLATION AT LYS-16; LYS-40; ASP-51; LYS-64; GLU-69; GLN-75; ASP-81 AND LYS-97</scope>
</reference>
<reference evidence="16" key="9">
    <citation type="journal article" date="2022" name="Biomolecules">
        <title>Interplay between Alba and Cren7 Regulates Chromatin Compaction in Sulfolobus solfataricus.</title>
        <authorList>
            <person name="Cajili M.K.M."/>
            <person name="Prieto E.I."/>
        </authorList>
    </citation>
    <scope>FUNCTION</scope>
    <scope>INTERACTION WITH ALBA2</scope>
</reference>
<reference evidence="16" key="10">
    <citation type="journal article" date="2023" name="Cell Rep.">
        <title>Nuclease activity of Plasmodium falciparum Alba family protein PfAlba3.</title>
        <authorList>
            <person name="Banerjee C."/>
            <person name="Nag S."/>
            <person name="Goyal M."/>
            <person name="Saha D."/>
            <person name="Siddiqui A.A."/>
            <person name="Mazumder S."/>
            <person name="Debsharma S."/>
            <person name="Pramanik S."/>
            <person name="Bandyopadhyay U."/>
        </authorList>
    </citation>
    <scope>FUNCTION</scope>
    <scope>CATALYTIC ACTIVITY</scope>
</reference>
<reference evidence="17 18" key="11">
    <citation type="journal article" date="2002" name="EMBO J.">
        <title>Structure of Alba: an archaeal chromatin protein modulated by acetylation.</title>
        <authorList>
            <person name="Wardleworth B.N."/>
            <person name="Russell R.J.M."/>
            <person name="Bell S.D."/>
            <person name="Taylor G.L."/>
            <person name="White M.F."/>
        </authorList>
    </citation>
    <scope>X-RAY CRYSTALLOGRAPHY (2.6 ANGSTROMS)</scope>
    <scope>FUNCTION</scope>
    <scope>SUBUNIT</scope>
    <source>
        <strain>ATCC 35092 / DSM 1617 / JCM 11322 / P2</strain>
    </source>
</reference>
<reference evidence="19" key="12">
    <citation type="journal article" date="2005" name="Structure">
        <title>Obligate heterodimerization of the archaeal Alba2 protein with Alba1 provides a mechanism for control of DNA packaging.</title>
        <authorList>
            <person name="Jelinska C."/>
            <person name="Conroy M.J."/>
            <person name="Craven C.J."/>
            <person name="Hounslow A.M."/>
            <person name="Bullough P.A."/>
            <person name="Waltho J.P."/>
            <person name="Taylor G.L."/>
            <person name="White M.F."/>
        </authorList>
    </citation>
    <scope>X-RAY CRYSTALLOGRAPHY (1.7 ANGSTROMS)</scope>
    <scope>FUNCTION</scope>
    <scope>INTERACTION WITH ALBA2</scope>
</reference>